<name>PYRH_CHLPD</name>
<reference key="1">
    <citation type="submission" date="2006-12" db="EMBL/GenBank/DDBJ databases">
        <title>Complete sequence of Chlorobium phaeobacteroides DSM 266.</title>
        <authorList>
            <consortium name="US DOE Joint Genome Institute"/>
            <person name="Copeland A."/>
            <person name="Lucas S."/>
            <person name="Lapidus A."/>
            <person name="Barry K."/>
            <person name="Detter J.C."/>
            <person name="Glavina del Rio T."/>
            <person name="Hammon N."/>
            <person name="Israni S."/>
            <person name="Pitluck S."/>
            <person name="Goltsman E."/>
            <person name="Schmutz J."/>
            <person name="Larimer F."/>
            <person name="Land M."/>
            <person name="Hauser L."/>
            <person name="Mikhailova N."/>
            <person name="Li T."/>
            <person name="Overmann J."/>
            <person name="Bryant D.A."/>
            <person name="Richardson P."/>
        </authorList>
    </citation>
    <scope>NUCLEOTIDE SEQUENCE [LARGE SCALE GENOMIC DNA]</scope>
    <source>
        <strain>DSM 266 / SMG 266 / 2430</strain>
    </source>
</reference>
<sequence length="236" mass="26220">MLRYKRILLKLSGEALAGEDGYGINAQMLERYAEEIREVRNLGAEVALVIGGGNIFRGVSEAAANMDRVQADYMGMLATVINAIAFQDALERKGVFTRLQTAIKMEQMAEPFIRRRAIRHLEKGRVVIFGAGTGNPYFTTDTAASLRAIEIEAELIVKGTRVNGVYDSDPEKNPDAVFYPKISYQDVIRKNLRVMDMTAITLCRENLLPIVVMNMNESGNFSRLLCGEEIGTLVHA</sequence>
<accession>A1BHZ3</accession>
<evidence type="ECO:0000255" key="1">
    <source>
        <dbReference type="HAMAP-Rule" id="MF_01220"/>
    </source>
</evidence>
<gene>
    <name evidence="1" type="primary">pyrH</name>
    <name type="ordered locus">Cpha266_2008</name>
</gene>
<organism>
    <name type="scientific">Chlorobium phaeobacteroides (strain DSM 266 / SMG 266 / 2430)</name>
    <dbReference type="NCBI Taxonomy" id="290317"/>
    <lineage>
        <taxon>Bacteria</taxon>
        <taxon>Pseudomonadati</taxon>
        <taxon>Chlorobiota</taxon>
        <taxon>Chlorobiia</taxon>
        <taxon>Chlorobiales</taxon>
        <taxon>Chlorobiaceae</taxon>
        <taxon>Chlorobium/Pelodictyon group</taxon>
        <taxon>Chlorobium</taxon>
    </lineage>
</organism>
<protein>
    <recommendedName>
        <fullName evidence="1">Uridylate kinase</fullName>
        <shortName evidence="1">UK</shortName>
        <ecNumber evidence="1">2.7.4.22</ecNumber>
    </recommendedName>
    <alternativeName>
        <fullName evidence="1">Uridine monophosphate kinase</fullName>
        <shortName evidence="1">UMP kinase</shortName>
        <shortName evidence="1">UMPK</shortName>
    </alternativeName>
</protein>
<proteinExistence type="inferred from homology"/>
<keyword id="KW-0021">Allosteric enzyme</keyword>
<keyword id="KW-0067">ATP-binding</keyword>
<keyword id="KW-0963">Cytoplasm</keyword>
<keyword id="KW-0418">Kinase</keyword>
<keyword id="KW-0547">Nucleotide-binding</keyword>
<keyword id="KW-0665">Pyrimidine biosynthesis</keyword>
<keyword id="KW-1185">Reference proteome</keyword>
<keyword id="KW-0808">Transferase</keyword>
<dbReference type="EC" id="2.7.4.22" evidence="1"/>
<dbReference type="EMBL" id="CP000492">
    <property type="protein sequence ID" value="ABL66020.1"/>
    <property type="molecule type" value="Genomic_DNA"/>
</dbReference>
<dbReference type="RefSeq" id="WP_011745824.1">
    <property type="nucleotide sequence ID" value="NC_008639.1"/>
</dbReference>
<dbReference type="SMR" id="A1BHZ3"/>
<dbReference type="STRING" id="290317.Cpha266_2008"/>
<dbReference type="KEGG" id="cph:Cpha266_2008"/>
<dbReference type="eggNOG" id="COG0528">
    <property type="taxonomic scope" value="Bacteria"/>
</dbReference>
<dbReference type="HOGENOM" id="CLU_033861_0_0_10"/>
<dbReference type="OrthoDB" id="9807458at2"/>
<dbReference type="UniPathway" id="UPA00159">
    <property type="reaction ID" value="UER00275"/>
</dbReference>
<dbReference type="Proteomes" id="UP000008701">
    <property type="component" value="Chromosome"/>
</dbReference>
<dbReference type="GO" id="GO:0005737">
    <property type="term" value="C:cytoplasm"/>
    <property type="evidence" value="ECO:0007669"/>
    <property type="project" value="UniProtKB-SubCell"/>
</dbReference>
<dbReference type="GO" id="GO:0005524">
    <property type="term" value="F:ATP binding"/>
    <property type="evidence" value="ECO:0007669"/>
    <property type="project" value="UniProtKB-KW"/>
</dbReference>
<dbReference type="GO" id="GO:0033862">
    <property type="term" value="F:UMP kinase activity"/>
    <property type="evidence" value="ECO:0007669"/>
    <property type="project" value="UniProtKB-EC"/>
</dbReference>
<dbReference type="GO" id="GO:0044210">
    <property type="term" value="P:'de novo' CTP biosynthetic process"/>
    <property type="evidence" value="ECO:0007669"/>
    <property type="project" value="UniProtKB-UniRule"/>
</dbReference>
<dbReference type="GO" id="GO:0006225">
    <property type="term" value="P:UDP biosynthetic process"/>
    <property type="evidence" value="ECO:0007669"/>
    <property type="project" value="TreeGrafter"/>
</dbReference>
<dbReference type="CDD" id="cd04254">
    <property type="entry name" value="AAK_UMPK-PyrH-Ec"/>
    <property type="match status" value="1"/>
</dbReference>
<dbReference type="FunFam" id="3.40.1160.10:FF:000001">
    <property type="entry name" value="Uridylate kinase"/>
    <property type="match status" value="1"/>
</dbReference>
<dbReference type="Gene3D" id="3.40.1160.10">
    <property type="entry name" value="Acetylglutamate kinase-like"/>
    <property type="match status" value="1"/>
</dbReference>
<dbReference type="HAMAP" id="MF_01220_B">
    <property type="entry name" value="PyrH_B"/>
    <property type="match status" value="1"/>
</dbReference>
<dbReference type="InterPro" id="IPR036393">
    <property type="entry name" value="AceGlu_kinase-like_sf"/>
</dbReference>
<dbReference type="InterPro" id="IPR001048">
    <property type="entry name" value="Asp/Glu/Uridylate_kinase"/>
</dbReference>
<dbReference type="InterPro" id="IPR011817">
    <property type="entry name" value="Uridylate_kinase"/>
</dbReference>
<dbReference type="InterPro" id="IPR015963">
    <property type="entry name" value="Uridylate_kinase_bac"/>
</dbReference>
<dbReference type="NCBIfam" id="TIGR02075">
    <property type="entry name" value="pyrH_bact"/>
    <property type="match status" value="1"/>
</dbReference>
<dbReference type="PANTHER" id="PTHR42833">
    <property type="entry name" value="URIDYLATE KINASE"/>
    <property type="match status" value="1"/>
</dbReference>
<dbReference type="PANTHER" id="PTHR42833:SF4">
    <property type="entry name" value="URIDYLATE KINASE PUMPKIN, CHLOROPLASTIC"/>
    <property type="match status" value="1"/>
</dbReference>
<dbReference type="Pfam" id="PF00696">
    <property type="entry name" value="AA_kinase"/>
    <property type="match status" value="1"/>
</dbReference>
<dbReference type="PIRSF" id="PIRSF005650">
    <property type="entry name" value="Uridylate_kin"/>
    <property type="match status" value="1"/>
</dbReference>
<dbReference type="SUPFAM" id="SSF53633">
    <property type="entry name" value="Carbamate kinase-like"/>
    <property type="match status" value="1"/>
</dbReference>
<feature type="chain" id="PRO_1000053906" description="Uridylate kinase">
    <location>
        <begin position="1"/>
        <end position="236"/>
    </location>
</feature>
<feature type="region of interest" description="Involved in allosteric activation by GTP" evidence="1">
    <location>
        <begin position="18"/>
        <end position="23"/>
    </location>
</feature>
<feature type="binding site" evidence="1">
    <location>
        <begin position="10"/>
        <end position="13"/>
    </location>
    <ligand>
        <name>ATP</name>
        <dbReference type="ChEBI" id="CHEBI:30616"/>
    </ligand>
</feature>
<feature type="binding site" evidence="1">
    <location>
        <position position="52"/>
    </location>
    <ligand>
        <name>UMP</name>
        <dbReference type="ChEBI" id="CHEBI:57865"/>
    </ligand>
</feature>
<feature type="binding site" evidence="1">
    <location>
        <position position="53"/>
    </location>
    <ligand>
        <name>ATP</name>
        <dbReference type="ChEBI" id="CHEBI:30616"/>
    </ligand>
</feature>
<feature type="binding site" evidence="1">
    <location>
        <position position="57"/>
    </location>
    <ligand>
        <name>ATP</name>
        <dbReference type="ChEBI" id="CHEBI:30616"/>
    </ligand>
</feature>
<feature type="binding site" evidence="1">
    <location>
        <position position="72"/>
    </location>
    <ligand>
        <name>UMP</name>
        <dbReference type="ChEBI" id="CHEBI:57865"/>
    </ligand>
</feature>
<feature type="binding site" evidence="1">
    <location>
        <begin position="133"/>
        <end position="140"/>
    </location>
    <ligand>
        <name>UMP</name>
        <dbReference type="ChEBI" id="CHEBI:57865"/>
    </ligand>
</feature>
<feature type="binding site" evidence="1">
    <location>
        <position position="160"/>
    </location>
    <ligand>
        <name>ATP</name>
        <dbReference type="ChEBI" id="CHEBI:30616"/>
    </ligand>
</feature>
<feature type="binding site" evidence="1">
    <location>
        <position position="166"/>
    </location>
    <ligand>
        <name>ATP</name>
        <dbReference type="ChEBI" id="CHEBI:30616"/>
    </ligand>
</feature>
<feature type="binding site" evidence="1">
    <location>
        <position position="169"/>
    </location>
    <ligand>
        <name>ATP</name>
        <dbReference type="ChEBI" id="CHEBI:30616"/>
    </ligand>
</feature>
<comment type="function">
    <text evidence="1">Catalyzes the reversible phosphorylation of UMP to UDP.</text>
</comment>
<comment type="catalytic activity">
    <reaction evidence="1">
        <text>UMP + ATP = UDP + ADP</text>
        <dbReference type="Rhea" id="RHEA:24400"/>
        <dbReference type="ChEBI" id="CHEBI:30616"/>
        <dbReference type="ChEBI" id="CHEBI:57865"/>
        <dbReference type="ChEBI" id="CHEBI:58223"/>
        <dbReference type="ChEBI" id="CHEBI:456216"/>
        <dbReference type="EC" id="2.7.4.22"/>
    </reaction>
</comment>
<comment type="activity regulation">
    <text evidence="1">Allosterically activated by GTP. Inhibited by UTP.</text>
</comment>
<comment type="pathway">
    <text evidence="1">Pyrimidine metabolism; CTP biosynthesis via de novo pathway; UDP from UMP (UMPK route): step 1/1.</text>
</comment>
<comment type="subunit">
    <text evidence="1">Homohexamer.</text>
</comment>
<comment type="subcellular location">
    <subcellularLocation>
        <location evidence="1">Cytoplasm</location>
    </subcellularLocation>
</comment>
<comment type="similarity">
    <text evidence="1">Belongs to the UMP kinase family.</text>
</comment>